<dbReference type="EMBL" id="CP000388">
    <property type="protein sequence ID" value="ABG42814.1"/>
    <property type="molecule type" value="Genomic_DNA"/>
</dbReference>
<dbReference type="RefSeq" id="WP_006994903.1">
    <property type="nucleotide sequence ID" value="NC_008228.1"/>
</dbReference>
<dbReference type="SMR" id="Q15MS4"/>
<dbReference type="STRING" id="342610.Patl_4315"/>
<dbReference type="KEGG" id="pat:Patl_4315"/>
<dbReference type="eggNOG" id="COG0230">
    <property type="taxonomic scope" value="Bacteria"/>
</dbReference>
<dbReference type="HOGENOM" id="CLU_129938_2_0_6"/>
<dbReference type="OrthoDB" id="9804164at2"/>
<dbReference type="Proteomes" id="UP000001981">
    <property type="component" value="Chromosome"/>
</dbReference>
<dbReference type="GO" id="GO:1990904">
    <property type="term" value="C:ribonucleoprotein complex"/>
    <property type="evidence" value="ECO:0007669"/>
    <property type="project" value="UniProtKB-KW"/>
</dbReference>
<dbReference type="GO" id="GO:0005840">
    <property type="term" value="C:ribosome"/>
    <property type="evidence" value="ECO:0007669"/>
    <property type="project" value="UniProtKB-KW"/>
</dbReference>
<dbReference type="GO" id="GO:0003735">
    <property type="term" value="F:structural constituent of ribosome"/>
    <property type="evidence" value="ECO:0007669"/>
    <property type="project" value="InterPro"/>
</dbReference>
<dbReference type="GO" id="GO:0006412">
    <property type="term" value="P:translation"/>
    <property type="evidence" value="ECO:0007669"/>
    <property type="project" value="UniProtKB-UniRule"/>
</dbReference>
<dbReference type="FunFam" id="1.10.287.3980:FF:000001">
    <property type="entry name" value="Mitochondrial ribosomal protein L34"/>
    <property type="match status" value="1"/>
</dbReference>
<dbReference type="Gene3D" id="1.10.287.3980">
    <property type="match status" value="1"/>
</dbReference>
<dbReference type="HAMAP" id="MF_00391">
    <property type="entry name" value="Ribosomal_bL34"/>
    <property type="match status" value="1"/>
</dbReference>
<dbReference type="InterPro" id="IPR000271">
    <property type="entry name" value="Ribosomal_bL34"/>
</dbReference>
<dbReference type="InterPro" id="IPR020939">
    <property type="entry name" value="Ribosomal_bL34_CS"/>
</dbReference>
<dbReference type="NCBIfam" id="TIGR01030">
    <property type="entry name" value="rpmH_bact"/>
    <property type="match status" value="1"/>
</dbReference>
<dbReference type="PANTHER" id="PTHR14503:SF4">
    <property type="entry name" value="LARGE RIBOSOMAL SUBUNIT PROTEIN BL34M"/>
    <property type="match status" value="1"/>
</dbReference>
<dbReference type="PANTHER" id="PTHR14503">
    <property type="entry name" value="MITOCHONDRIAL RIBOSOMAL PROTEIN 34 FAMILY MEMBER"/>
    <property type="match status" value="1"/>
</dbReference>
<dbReference type="Pfam" id="PF00468">
    <property type="entry name" value="Ribosomal_L34"/>
    <property type="match status" value="1"/>
</dbReference>
<dbReference type="PROSITE" id="PS00784">
    <property type="entry name" value="RIBOSOMAL_L34"/>
    <property type="match status" value="1"/>
</dbReference>
<gene>
    <name evidence="1" type="primary">rpmH</name>
    <name type="ordered locus">Patl_4315</name>
</gene>
<accession>Q15MS4</accession>
<organism>
    <name type="scientific">Pseudoalteromonas atlantica (strain T6c / ATCC BAA-1087)</name>
    <dbReference type="NCBI Taxonomy" id="3042615"/>
    <lineage>
        <taxon>Bacteria</taxon>
        <taxon>Pseudomonadati</taxon>
        <taxon>Pseudomonadota</taxon>
        <taxon>Gammaproteobacteria</taxon>
        <taxon>Alteromonadales</taxon>
        <taxon>Alteromonadaceae</taxon>
        <taxon>Paraglaciecola</taxon>
    </lineage>
</organism>
<protein>
    <recommendedName>
        <fullName evidence="1">Large ribosomal subunit protein bL34</fullName>
    </recommendedName>
    <alternativeName>
        <fullName evidence="2">50S ribosomal protein L34</fullName>
    </alternativeName>
</protein>
<name>RL34_PSEA6</name>
<keyword id="KW-0687">Ribonucleoprotein</keyword>
<keyword id="KW-0689">Ribosomal protein</keyword>
<comment type="similarity">
    <text evidence="1">Belongs to the bacterial ribosomal protein bL34 family.</text>
</comment>
<feature type="chain" id="PRO_1000013406" description="Large ribosomal subunit protein bL34">
    <location>
        <begin position="1"/>
        <end position="44"/>
    </location>
</feature>
<sequence>MKRTFQPSNLKRKRSHGFRARMATKNGRKVIANRRAKGRARLTA</sequence>
<evidence type="ECO:0000255" key="1">
    <source>
        <dbReference type="HAMAP-Rule" id="MF_00391"/>
    </source>
</evidence>
<evidence type="ECO:0000305" key="2"/>
<proteinExistence type="inferred from homology"/>
<reference key="1">
    <citation type="submission" date="2006-06" db="EMBL/GenBank/DDBJ databases">
        <title>Complete sequence of Pseudoalteromonas atlantica T6c.</title>
        <authorList>
            <consortium name="US DOE Joint Genome Institute"/>
            <person name="Copeland A."/>
            <person name="Lucas S."/>
            <person name="Lapidus A."/>
            <person name="Barry K."/>
            <person name="Detter J.C."/>
            <person name="Glavina del Rio T."/>
            <person name="Hammon N."/>
            <person name="Israni S."/>
            <person name="Dalin E."/>
            <person name="Tice H."/>
            <person name="Pitluck S."/>
            <person name="Saunders E."/>
            <person name="Brettin T."/>
            <person name="Bruce D."/>
            <person name="Han C."/>
            <person name="Tapia R."/>
            <person name="Gilna P."/>
            <person name="Schmutz J."/>
            <person name="Larimer F."/>
            <person name="Land M."/>
            <person name="Hauser L."/>
            <person name="Kyrpides N."/>
            <person name="Kim E."/>
            <person name="Karls A.C."/>
            <person name="Bartlett D."/>
            <person name="Higgins B.P."/>
            <person name="Richardson P."/>
        </authorList>
    </citation>
    <scope>NUCLEOTIDE SEQUENCE [LARGE SCALE GENOMIC DNA]</scope>
    <source>
        <strain>T6c / ATCC BAA-1087</strain>
    </source>
</reference>